<reference key="1">
    <citation type="submission" date="2007-02" db="EMBL/GenBank/DDBJ databases">
        <title>Complete sequence of Mycobacterium sp. JLS.</title>
        <authorList>
            <consortium name="US DOE Joint Genome Institute"/>
            <person name="Copeland A."/>
            <person name="Lucas S."/>
            <person name="Lapidus A."/>
            <person name="Barry K."/>
            <person name="Detter J.C."/>
            <person name="Glavina del Rio T."/>
            <person name="Hammon N."/>
            <person name="Israni S."/>
            <person name="Dalin E."/>
            <person name="Tice H."/>
            <person name="Pitluck S."/>
            <person name="Chain P."/>
            <person name="Malfatti S."/>
            <person name="Shin M."/>
            <person name="Vergez L."/>
            <person name="Schmutz J."/>
            <person name="Larimer F."/>
            <person name="Land M."/>
            <person name="Hauser L."/>
            <person name="Kyrpides N."/>
            <person name="Mikhailova N."/>
            <person name="Miller C.D."/>
            <person name="Anderson A.J."/>
            <person name="Sims R.C."/>
            <person name="Richardson P."/>
        </authorList>
    </citation>
    <scope>NUCLEOTIDE SEQUENCE [LARGE SCALE GENOMIC DNA]</scope>
    <source>
        <strain>JLS</strain>
    </source>
</reference>
<accession>A3Q1M7</accession>
<feature type="chain" id="PRO_1000062899" description="Transcriptional regulator MraZ">
    <location>
        <begin position="1"/>
        <end position="143"/>
    </location>
</feature>
<feature type="domain" description="SpoVT-AbrB 1" evidence="2">
    <location>
        <begin position="5"/>
        <end position="47"/>
    </location>
</feature>
<feature type="domain" description="SpoVT-AbrB 2" evidence="2">
    <location>
        <begin position="76"/>
        <end position="119"/>
    </location>
</feature>
<dbReference type="EMBL" id="CP000580">
    <property type="protein sequence ID" value="ABN99054.1"/>
    <property type="molecule type" value="Genomic_DNA"/>
</dbReference>
<dbReference type="SMR" id="A3Q1M7"/>
<dbReference type="KEGG" id="mjl:Mjls_3276"/>
<dbReference type="HOGENOM" id="CLU_107907_0_5_11"/>
<dbReference type="BioCyc" id="MSP164757:G1G8C-3302-MONOMER"/>
<dbReference type="GO" id="GO:0005737">
    <property type="term" value="C:cytoplasm"/>
    <property type="evidence" value="ECO:0007669"/>
    <property type="project" value="UniProtKB-UniRule"/>
</dbReference>
<dbReference type="GO" id="GO:0009295">
    <property type="term" value="C:nucleoid"/>
    <property type="evidence" value="ECO:0007669"/>
    <property type="project" value="UniProtKB-SubCell"/>
</dbReference>
<dbReference type="GO" id="GO:0003700">
    <property type="term" value="F:DNA-binding transcription factor activity"/>
    <property type="evidence" value="ECO:0007669"/>
    <property type="project" value="UniProtKB-UniRule"/>
</dbReference>
<dbReference type="GO" id="GO:0000976">
    <property type="term" value="F:transcription cis-regulatory region binding"/>
    <property type="evidence" value="ECO:0007669"/>
    <property type="project" value="TreeGrafter"/>
</dbReference>
<dbReference type="GO" id="GO:2000143">
    <property type="term" value="P:negative regulation of DNA-templated transcription initiation"/>
    <property type="evidence" value="ECO:0007669"/>
    <property type="project" value="TreeGrafter"/>
</dbReference>
<dbReference type="CDD" id="cd16321">
    <property type="entry name" value="MraZ_C"/>
    <property type="match status" value="1"/>
</dbReference>
<dbReference type="CDD" id="cd16320">
    <property type="entry name" value="MraZ_N"/>
    <property type="match status" value="1"/>
</dbReference>
<dbReference type="Gene3D" id="3.40.1550.20">
    <property type="entry name" value="Transcriptional regulator MraZ domain"/>
    <property type="match status" value="1"/>
</dbReference>
<dbReference type="HAMAP" id="MF_01008">
    <property type="entry name" value="MraZ"/>
    <property type="match status" value="1"/>
</dbReference>
<dbReference type="InterPro" id="IPR003444">
    <property type="entry name" value="MraZ"/>
</dbReference>
<dbReference type="InterPro" id="IPR035644">
    <property type="entry name" value="MraZ_C"/>
</dbReference>
<dbReference type="InterPro" id="IPR020603">
    <property type="entry name" value="MraZ_dom"/>
</dbReference>
<dbReference type="InterPro" id="IPR035642">
    <property type="entry name" value="MraZ_N"/>
</dbReference>
<dbReference type="InterPro" id="IPR038619">
    <property type="entry name" value="MraZ_sf"/>
</dbReference>
<dbReference type="InterPro" id="IPR007159">
    <property type="entry name" value="SpoVT-AbrB_dom"/>
</dbReference>
<dbReference type="InterPro" id="IPR037914">
    <property type="entry name" value="SpoVT-AbrB_sf"/>
</dbReference>
<dbReference type="NCBIfam" id="TIGR00242">
    <property type="entry name" value="division/cell wall cluster transcriptional repressor MraZ"/>
    <property type="match status" value="1"/>
</dbReference>
<dbReference type="PANTHER" id="PTHR34701">
    <property type="entry name" value="TRANSCRIPTIONAL REGULATOR MRAZ"/>
    <property type="match status" value="1"/>
</dbReference>
<dbReference type="PANTHER" id="PTHR34701:SF1">
    <property type="entry name" value="TRANSCRIPTIONAL REGULATOR MRAZ"/>
    <property type="match status" value="1"/>
</dbReference>
<dbReference type="Pfam" id="PF02381">
    <property type="entry name" value="MraZ"/>
    <property type="match status" value="2"/>
</dbReference>
<dbReference type="SUPFAM" id="SSF89447">
    <property type="entry name" value="AbrB/MazE/MraZ-like"/>
    <property type="match status" value="1"/>
</dbReference>
<dbReference type="PROSITE" id="PS51740">
    <property type="entry name" value="SPOVT_ABRB"/>
    <property type="match status" value="2"/>
</dbReference>
<sequence length="143" mass="16013">MFLGTYTPKLDDKGRLTLPAKFRDALAGGLMVTKSQDHSLAVYPRAEFEKLARRASQASRSNPEARAFLRNLAAATDEQHPDAQGRITLSADHRRYASLSKECVVIGSVDYLEIWDAAAWQEYQQAHEENFSAATDETLRDII</sequence>
<name>MRAZ_MYCSJ</name>
<organism>
    <name type="scientific">Mycobacterium sp. (strain JLS)</name>
    <dbReference type="NCBI Taxonomy" id="164757"/>
    <lineage>
        <taxon>Bacteria</taxon>
        <taxon>Bacillati</taxon>
        <taxon>Actinomycetota</taxon>
        <taxon>Actinomycetes</taxon>
        <taxon>Mycobacteriales</taxon>
        <taxon>Mycobacteriaceae</taxon>
        <taxon>Mycobacterium</taxon>
    </lineage>
</organism>
<comment type="subunit">
    <text evidence="1">Forms oligomers.</text>
</comment>
<comment type="subcellular location">
    <subcellularLocation>
        <location evidence="1">Cytoplasm</location>
        <location evidence="1">Nucleoid</location>
    </subcellularLocation>
</comment>
<comment type="similarity">
    <text evidence="1">Belongs to the MraZ family.</text>
</comment>
<evidence type="ECO:0000255" key="1">
    <source>
        <dbReference type="HAMAP-Rule" id="MF_01008"/>
    </source>
</evidence>
<evidence type="ECO:0000255" key="2">
    <source>
        <dbReference type="PROSITE-ProRule" id="PRU01076"/>
    </source>
</evidence>
<gene>
    <name evidence="1" type="primary">mraZ</name>
    <name type="ordered locus">Mjls_3276</name>
</gene>
<keyword id="KW-0963">Cytoplasm</keyword>
<keyword id="KW-0238">DNA-binding</keyword>
<keyword id="KW-0677">Repeat</keyword>
<keyword id="KW-0804">Transcription</keyword>
<keyword id="KW-0805">Transcription regulation</keyword>
<protein>
    <recommendedName>
        <fullName>Transcriptional regulator MraZ</fullName>
    </recommendedName>
</protein>
<proteinExistence type="inferred from homology"/>